<evidence type="ECO:0000255" key="1">
    <source>
        <dbReference type="HAMAP-Rule" id="MF_01271"/>
    </source>
</evidence>
<organism>
    <name type="scientific">Salmonella gallinarum (strain 287/91 / NCTC 13346)</name>
    <dbReference type="NCBI Taxonomy" id="550538"/>
    <lineage>
        <taxon>Bacteria</taxon>
        <taxon>Pseudomonadati</taxon>
        <taxon>Pseudomonadota</taxon>
        <taxon>Gammaproteobacteria</taxon>
        <taxon>Enterobacterales</taxon>
        <taxon>Enterobacteriaceae</taxon>
        <taxon>Salmonella</taxon>
    </lineage>
</organism>
<accession>B5RB82</accession>
<protein>
    <recommendedName>
        <fullName evidence="1">N-acetyl-D-glucosamine kinase</fullName>
        <ecNumber evidence="1">2.7.1.59</ecNumber>
    </recommendedName>
    <alternativeName>
        <fullName evidence="1">GlcNAc kinase</fullName>
    </alternativeName>
</protein>
<name>NAGK_SALG2</name>
<gene>
    <name evidence="1" type="primary">nagK</name>
    <name type="ordered locus">SG1901</name>
</gene>
<reference key="1">
    <citation type="journal article" date="2008" name="Genome Res.">
        <title>Comparative genome analysis of Salmonella enteritidis PT4 and Salmonella gallinarum 287/91 provides insights into evolutionary and host adaptation pathways.</title>
        <authorList>
            <person name="Thomson N.R."/>
            <person name="Clayton D.J."/>
            <person name="Windhorst D."/>
            <person name="Vernikos G."/>
            <person name="Davidson S."/>
            <person name="Churcher C."/>
            <person name="Quail M.A."/>
            <person name="Stevens M."/>
            <person name="Jones M.A."/>
            <person name="Watson M."/>
            <person name="Barron A."/>
            <person name="Layton A."/>
            <person name="Pickard D."/>
            <person name="Kingsley R.A."/>
            <person name="Bignell A."/>
            <person name="Clark L."/>
            <person name="Harris B."/>
            <person name="Ormond D."/>
            <person name="Abdellah Z."/>
            <person name="Brooks K."/>
            <person name="Cherevach I."/>
            <person name="Chillingworth T."/>
            <person name="Woodward J."/>
            <person name="Norberczak H."/>
            <person name="Lord A."/>
            <person name="Arrowsmith C."/>
            <person name="Jagels K."/>
            <person name="Moule S."/>
            <person name="Mungall K."/>
            <person name="Saunders M."/>
            <person name="Whitehead S."/>
            <person name="Chabalgoity J.A."/>
            <person name="Maskell D."/>
            <person name="Humphreys T."/>
            <person name="Roberts M."/>
            <person name="Barrow P.A."/>
            <person name="Dougan G."/>
            <person name="Parkhill J."/>
        </authorList>
    </citation>
    <scope>NUCLEOTIDE SEQUENCE [LARGE SCALE GENOMIC DNA]</scope>
    <source>
        <strain>287/91 / NCTC 13346</strain>
    </source>
</reference>
<comment type="function">
    <text evidence="1">Catalyzes the phosphorylation of N-acetyl-D-glucosamine (GlcNAc) derived from cell-wall degradation, yielding GlcNAc-6-P.</text>
</comment>
<comment type="catalytic activity">
    <reaction evidence="1">
        <text>N-acetyl-D-glucosamine + ATP = N-acetyl-D-glucosamine 6-phosphate + ADP + H(+)</text>
        <dbReference type="Rhea" id="RHEA:17417"/>
        <dbReference type="ChEBI" id="CHEBI:15378"/>
        <dbReference type="ChEBI" id="CHEBI:30616"/>
        <dbReference type="ChEBI" id="CHEBI:57513"/>
        <dbReference type="ChEBI" id="CHEBI:456216"/>
        <dbReference type="ChEBI" id="CHEBI:506227"/>
        <dbReference type="EC" id="2.7.1.59"/>
    </reaction>
</comment>
<comment type="pathway">
    <text evidence="1">Cell wall biogenesis; peptidoglycan recycling.</text>
</comment>
<comment type="similarity">
    <text evidence="1">Belongs to the ROK (NagC/XylR) family. NagK subfamily.</text>
</comment>
<dbReference type="EC" id="2.7.1.59" evidence="1"/>
<dbReference type="EMBL" id="AM933173">
    <property type="protein sequence ID" value="CAR37753.1"/>
    <property type="molecule type" value="Genomic_DNA"/>
</dbReference>
<dbReference type="RefSeq" id="WP_000291336.1">
    <property type="nucleotide sequence ID" value="NC_011274.1"/>
</dbReference>
<dbReference type="SMR" id="B5RB82"/>
<dbReference type="KEGG" id="seg:SG1901"/>
<dbReference type="HOGENOM" id="CLU_036604_0_3_6"/>
<dbReference type="UniPathway" id="UPA00544"/>
<dbReference type="Proteomes" id="UP000008321">
    <property type="component" value="Chromosome"/>
</dbReference>
<dbReference type="GO" id="GO:0005524">
    <property type="term" value="F:ATP binding"/>
    <property type="evidence" value="ECO:0007669"/>
    <property type="project" value="UniProtKB-UniRule"/>
</dbReference>
<dbReference type="GO" id="GO:0045127">
    <property type="term" value="F:N-acetylglucosamine kinase activity"/>
    <property type="evidence" value="ECO:0007669"/>
    <property type="project" value="UniProtKB-UniRule"/>
</dbReference>
<dbReference type="GO" id="GO:0008270">
    <property type="term" value="F:zinc ion binding"/>
    <property type="evidence" value="ECO:0007669"/>
    <property type="project" value="UniProtKB-UniRule"/>
</dbReference>
<dbReference type="GO" id="GO:0006044">
    <property type="term" value="P:N-acetylglucosamine metabolic process"/>
    <property type="evidence" value="ECO:0007669"/>
    <property type="project" value="UniProtKB-UniRule"/>
</dbReference>
<dbReference type="GO" id="GO:0009254">
    <property type="term" value="P:peptidoglycan turnover"/>
    <property type="evidence" value="ECO:0007669"/>
    <property type="project" value="UniProtKB-UniRule"/>
</dbReference>
<dbReference type="CDD" id="cd24057">
    <property type="entry name" value="ASKHA_NBD_ROK_NAGK"/>
    <property type="match status" value="1"/>
</dbReference>
<dbReference type="FunFam" id="3.30.420.40:FF:000049">
    <property type="entry name" value="N-acetyl-D-glucosamine kinase"/>
    <property type="match status" value="1"/>
</dbReference>
<dbReference type="FunFam" id="3.30.420.40:FF:000051">
    <property type="entry name" value="N-acetyl-D-glucosamine kinase"/>
    <property type="match status" value="1"/>
</dbReference>
<dbReference type="Gene3D" id="3.30.420.40">
    <property type="match status" value="2"/>
</dbReference>
<dbReference type="HAMAP" id="MF_01271">
    <property type="entry name" value="GlcNAc_kinase"/>
    <property type="match status" value="1"/>
</dbReference>
<dbReference type="InterPro" id="IPR043129">
    <property type="entry name" value="ATPase_NBD"/>
</dbReference>
<dbReference type="InterPro" id="IPR023505">
    <property type="entry name" value="N-acetyl-D-glucosamine_kinase"/>
</dbReference>
<dbReference type="InterPro" id="IPR000600">
    <property type="entry name" value="ROK"/>
</dbReference>
<dbReference type="InterPro" id="IPR049874">
    <property type="entry name" value="ROK_cs"/>
</dbReference>
<dbReference type="NCBIfam" id="NF009835">
    <property type="entry name" value="PRK13310.1"/>
    <property type="match status" value="1"/>
</dbReference>
<dbReference type="PANTHER" id="PTHR18964:SF162">
    <property type="entry name" value="N-ACETYL-D-GLUCOSAMINE KINASE"/>
    <property type="match status" value="1"/>
</dbReference>
<dbReference type="PANTHER" id="PTHR18964">
    <property type="entry name" value="ROK (REPRESSOR, ORF, KINASE) FAMILY"/>
    <property type="match status" value="1"/>
</dbReference>
<dbReference type="Pfam" id="PF00480">
    <property type="entry name" value="ROK"/>
    <property type="match status" value="1"/>
</dbReference>
<dbReference type="SUPFAM" id="SSF53067">
    <property type="entry name" value="Actin-like ATPase domain"/>
    <property type="match status" value="1"/>
</dbReference>
<dbReference type="PROSITE" id="PS01125">
    <property type="entry name" value="ROK"/>
    <property type="match status" value="1"/>
</dbReference>
<sequence>MYYGFDIGGTKIALGVFDSTRRLQWEKRVPTPHTSYSAFLDAVCELVAEADQRLGVKGSVGIGIPGMPETEDGTLYAANVPAASGKPLRADLSARLDRDVRLDNDANCFALSEAWDDEFTQYPLVMGLILGTGVGGGLVLNGKPITGQSYITGEFGHMRLPVDALTLMGFDFPLRRCGCGQMGCIENYLSGRGFAWLYQHYYDQSLQAPEIIALWEQGDEQAHAHVERYLDLLAVCLGNILTIVDPDLLVIGGGLSNFTAITTQLAERLPRHLLPVARAPRIERARHGDAGGMRGAAFLHLTD</sequence>
<proteinExistence type="inferred from homology"/>
<feature type="chain" id="PRO_1000140193" description="N-acetyl-D-glucosamine kinase">
    <location>
        <begin position="1"/>
        <end position="303"/>
    </location>
</feature>
<feature type="binding site" evidence="1">
    <location>
        <begin position="4"/>
        <end position="11"/>
    </location>
    <ligand>
        <name>ATP</name>
        <dbReference type="ChEBI" id="CHEBI:30616"/>
    </ligand>
</feature>
<feature type="binding site" evidence="1">
    <location>
        <begin position="133"/>
        <end position="140"/>
    </location>
    <ligand>
        <name>ATP</name>
        <dbReference type="ChEBI" id="CHEBI:30616"/>
    </ligand>
</feature>
<feature type="binding site" evidence="1">
    <location>
        <position position="157"/>
    </location>
    <ligand>
        <name>Zn(2+)</name>
        <dbReference type="ChEBI" id="CHEBI:29105"/>
    </ligand>
</feature>
<feature type="binding site" evidence="1">
    <location>
        <position position="177"/>
    </location>
    <ligand>
        <name>Zn(2+)</name>
        <dbReference type="ChEBI" id="CHEBI:29105"/>
    </ligand>
</feature>
<feature type="binding site" evidence="1">
    <location>
        <position position="179"/>
    </location>
    <ligand>
        <name>Zn(2+)</name>
        <dbReference type="ChEBI" id="CHEBI:29105"/>
    </ligand>
</feature>
<feature type="binding site" evidence="1">
    <location>
        <position position="184"/>
    </location>
    <ligand>
        <name>Zn(2+)</name>
        <dbReference type="ChEBI" id="CHEBI:29105"/>
    </ligand>
</feature>
<keyword id="KW-0067">ATP-binding</keyword>
<keyword id="KW-0119">Carbohydrate metabolism</keyword>
<keyword id="KW-0418">Kinase</keyword>
<keyword id="KW-0479">Metal-binding</keyword>
<keyword id="KW-0547">Nucleotide-binding</keyword>
<keyword id="KW-0808">Transferase</keyword>
<keyword id="KW-0862">Zinc</keyword>